<sequence length="354" mass="36609">MEQNVFFLPHEGLKLAELAEFLGAELANSDHSDVIVRSVAPISRARAGDVCYILSRRNREEFATCEASAVICDKALADVVPPHLPVILSSNPHAAFAMAGGLFYPAALRPVAISGESEIAPSAVIDPSAKLEKGVIVEPLAVIGPHAEIGEGTRIGANSVIGPDVKIGRDCSIAAGASILCALIGNGVVIHNGVRIGQDGFGYAPGPRGMIKIVQIGRVIIQDNVEIGANTTIDRGAMDDTVIGEGTKIDNQVQIGHNVQIGRHCAIVSQVGIAGSTKIGNGVQIGGQVGIKGHVTIGDGVQIAAKSGIMTDLAAGGQYGGIPARPLKDYLREAAQQVSKSKLRGRNPGGKQND</sequence>
<keyword id="KW-0012">Acyltransferase</keyword>
<keyword id="KW-0441">Lipid A biosynthesis</keyword>
<keyword id="KW-0444">Lipid biosynthesis</keyword>
<keyword id="KW-0443">Lipid metabolism</keyword>
<keyword id="KW-1185">Reference proteome</keyword>
<keyword id="KW-0677">Repeat</keyword>
<keyword id="KW-0808">Transferase</keyword>
<comment type="function">
    <text evidence="1">Catalyzes the N-acylation of UDP-3-O-acylglucosamine using 3-hydroxyacyl-ACP as the acyl donor. Is involved in the biosynthesis of lipid A, a phosphorylated glycolipid that anchors the lipopolysaccharide to the outer membrane of the cell.</text>
</comment>
<comment type="catalytic activity">
    <reaction evidence="1">
        <text>a UDP-3-O-[(3R)-3-hydroxyacyl]-alpha-D-glucosamine + a (3R)-hydroxyacyl-[ACP] = a UDP-2-N,3-O-bis[(3R)-3-hydroxyacyl]-alpha-D-glucosamine + holo-[ACP] + H(+)</text>
        <dbReference type="Rhea" id="RHEA:53836"/>
        <dbReference type="Rhea" id="RHEA-COMP:9685"/>
        <dbReference type="Rhea" id="RHEA-COMP:9945"/>
        <dbReference type="ChEBI" id="CHEBI:15378"/>
        <dbReference type="ChEBI" id="CHEBI:64479"/>
        <dbReference type="ChEBI" id="CHEBI:78827"/>
        <dbReference type="ChEBI" id="CHEBI:137740"/>
        <dbReference type="ChEBI" id="CHEBI:137748"/>
        <dbReference type="EC" id="2.3.1.191"/>
    </reaction>
</comment>
<comment type="pathway">
    <text evidence="1">Bacterial outer membrane biogenesis; LPS lipid A biosynthesis.</text>
</comment>
<comment type="subunit">
    <text evidence="1">Homotrimer.</text>
</comment>
<comment type="similarity">
    <text evidence="1">Belongs to the transferase hexapeptide repeat family. LpxD subfamily.</text>
</comment>
<gene>
    <name evidence="1" type="primary">lpxD</name>
    <name type="ordered locus">RHE_CH01921</name>
</gene>
<dbReference type="EC" id="2.3.1.191" evidence="1"/>
<dbReference type="EMBL" id="CP000133">
    <property type="protein sequence ID" value="ABC90707.1"/>
    <property type="molecule type" value="Genomic_DNA"/>
</dbReference>
<dbReference type="RefSeq" id="WP_011425199.1">
    <property type="nucleotide sequence ID" value="NC_007761.1"/>
</dbReference>
<dbReference type="SMR" id="Q2K8X9"/>
<dbReference type="KEGG" id="ret:RHE_CH01921"/>
<dbReference type="eggNOG" id="COG1044">
    <property type="taxonomic scope" value="Bacteria"/>
</dbReference>
<dbReference type="HOGENOM" id="CLU_049865_0_0_5"/>
<dbReference type="OrthoDB" id="9784739at2"/>
<dbReference type="UniPathway" id="UPA00973"/>
<dbReference type="Proteomes" id="UP000001936">
    <property type="component" value="Chromosome"/>
</dbReference>
<dbReference type="GO" id="GO:0016020">
    <property type="term" value="C:membrane"/>
    <property type="evidence" value="ECO:0007669"/>
    <property type="project" value="GOC"/>
</dbReference>
<dbReference type="GO" id="GO:0016410">
    <property type="term" value="F:N-acyltransferase activity"/>
    <property type="evidence" value="ECO:0007669"/>
    <property type="project" value="InterPro"/>
</dbReference>
<dbReference type="GO" id="GO:0009245">
    <property type="term" value="P:lipid A biosynthetic process"/>
    <property type="evidence" value="ECO:0007669"/>
    <property type="project" value="UniProtKB-UniRule"/>
</dbReference>
<dbReference type="CDD" id="cd03352">
    <property type="entry name" value="LbH_LpxD"/>
    <property type="match status" value="1"/>
</dbReference>
<dbReference type="Gene3D" id="2.160.10.10">
    <property type="entry name" value="Hexapeptide repeat proteins"/>
    <property type="match status" value="1"/>
</dbReference>
<dbReference type="Gene3D" id="3.40.1390.10">
    <property type="entry name" value="MurE/MurF, N-terminal domain"/>
    <property type="match status" value="1"/>
</dbReference>
<dbReference type="HAMAP" id="MF_00523">
    <property type="entry name" value="LpxD"/>
    <property type="match status" value="1"/>
</dbReference>
<dbReference type="InterPro" id="IPR001451">
    <property type="entry name" value="Hexapep"/>
</dbReference>
<dbReference type="InterPro" id="IPR018357">
    <property type="entry name" value="Hexapep_transf_CS"/>
</dbReference>
<dbReference type="InterPro" id="IPR007691">
    <property type="entry name" value="LpxD"/>
</dbReference>
<dbReference type="InterPro" id="IPR011004">
    <property type="entry name" value="Trimer_LpxA-like_sf"/>
</dbReference>
<dbReference type="InterPro" id="IPR020573">
    <property type="entry name" value="UDP_GlcNAc_AcTrfase_non-rep"/>
</dbReference>
<dbReference type="NCBIfam" id="TIGR01853">
    <property type="entry name" value="lipid_A_lpxD"/>
    <property type="match status" value="1"/>
</dbReference>
<dbReference type="NCBIfam" id="NF002060">
    <property type="entry name" value="PRK00892.1"/>
    <property type="match status" value="1"/>
</dbReference>
<dbReference type="PANTHER" id="PTHR43378">
    <property type="entry name" value="UDP-3-O-ACYLGLUCOSAMINE N-ACYLTRANSFERASE"/>
    <property type="match status" value="1"/>
</dbReference>
<dbReference type="PANTHER" id="PTHR43378:SF2">
    <property type="entry name" value="UDP-3-O-ACYLGLUCOSAMINE N-ACYLTRANSFERASE 1, MITOCHONDRIAL-RELATED"/>
    <property type="match status" value="1"/>
</dbReference>
<dbReference type="Pfam" id="PF00132">
    <property type="entry name" value="Hexapep"/>
    <property type="match status" value="3"/>
</dbReference>
<dbReference type="Pfam" id="PF04613">
    <property type="entry name" value="LpxD"/>
    <property type="match status" value="1"/>
</dbReference>
<dbReference type="SUPFAM" id="SSF51161">
    <property type="entry name" value="Trimeric LpxA-like enzymes"/>
    <property type="match status" value="1"/>
</dbReference>
<dbReference type="PROSITE" id="PS00101">
    <property type="entry name" value="HEXAPEP_TRANSFERASES"/>
    <property type="match status" value="2"/>
</dbReference>
<reference key="1">
    <citation type="journal article" date="2006" name="Proc. Natl. Acad. Sci. U.S.A.">
        <title>The partitioned Rhizobium etli genome: genetic and metabolic redundancy in seven interacting replicons.</title>
        <authorList>
            <person name="Gonzalez V."/>
            <person name="Santamaria R.I."/>
            <person name="Bustos P."/>
            <person name="Hernandez-Gonzalez I."/>
            <person name="Medrano-Soto A."/>
            <person name="Moreno-Hagelsieb G."/>
            <person name="Janga S.C."/>
            <person name="Ramirez M.A."/>
            <person name="Jimenez-Jacinto V."/>
            <person name="Collado-Vides J."/>
            <person name="Davila G."/>
        </authorList>
    </citation>
    <scope>NUCLEOTIDE SEQUENCE [LARGE SCALE GENOMIC DNA]</scope>
    <source>
        <strain>ATCC 51251 / DSM 11541 / JCM 21823 / NBRC 15573 / CFN 42</strain>
    </source>
</reference>
<accession>Q2K8X9</accession>
<protein>
    <recommendedName>
        <fullName evidence="1">UDP-3-O-acylglucosamine N-acyltransferase</fullName>
        <ecNumber evidence="1">2.3.1.191</ecNumber>
    </recommendedName>
</protein>
<name>LPXD_RHIEC</name>
<organism>
    <name type="scientific">Rhizobium etli (strain ATCC 51251 / DSM 11541 / JCM 21823 / NBRC 15573 / CFN 42)</name>
    <dbReference type="NCBI Taxonomy" id="347834"/>
    <lineage>
        <taxon>Bacteria</taxon>
        <taxon>Pseudomonadati</taxon>
        <taxon>Pseudomonadota</taxon>
        <taxon>Alphaproteobacteria</taxon>
        <taxon>Hyphomicrobiales</taxon>
        <taxon>Rhizobiaceae</taxon>
        <taxon>Rhizobium/Agrobacterium group</taxon>
        <taxon>Rhizobium</taxon>
    </lineage>
</organism>
<proteinExistence type="inferred from homology"/>
<feature type="chain" id="PRO_0000264421" description="UDP-3-O-acylglucosamine N-acyltransferase">
    <location>
        <begin position="1"/>
        <end position="354"/>
    </location>
</feature>
<feature type="region of interest" description="Disordered" evidence="2">
    <location>
        <begin position="335"/>
        <end position="354"/>
    </location>
</feature>
<feature type="active site" description="Proton acceptor" evidence="1">
    <location>
        <position position="257"/>
    </location>
</feature>
<evidence type="ECO:0000255" key="1">
    <source>
        <dbReference type="HAMAP-Rule" id="MF_00523"/>
    </source>
</evidence>
<evidence type="ECO:0000256" key="2">
    <source>
        <dbReference type="SAM" id="MobiDB-lite"/>
    </source>
</evidence>